<protein>
    <recommendedName>
        <fullName evidence="1">UPF0758 protein YicR</fullName>
    </recommendedName>
</protein>
<reference key="1">
    <citation type="journal article" date="2001" name="Nature">
        <title>Complete genome sequence of a multiple drug resistant Salmonella enterica serovar Typhi CT18.</title>
        <authorList>
            <person name="Parkhill J."/>
            <person name="Dougan G."/>
            <person name="James K.D."/>
            <person name="Thomson N.R."/>
            <person name="Pickard D."/>
            <person name="Wain J."/>
            <person name="Churcher C.M."/>
            <person name="Mungall K.L."/>
            <person name="Bentley S.D."/>
            <person name="Holden M.T.G."/>
            <person name="Sebaihia M."/>
            <person name="Baker S."/>
            <person name="Basham D."/>
            <person name="Brooks K."/>
            <person name="Chillingworth T."/>
            <person name="Connerton P."/>
            <person name="Cronin A."/>
            <person name="Davis P."/>
            <person name="Davies R.M."/>
            <person name="Dowd L."/>
            <person name="White N."/>
            <person name="Farrar J."/>
            <person name="Feltwell T."/>
            <person name="Hamlin N."/>
            <person name="Haque A."/>
            <person name="Hien T.T."/>
            <person name="Holroyd S."/>
            <person name="Jagels K."/>
            <person name="Krogh A."/>
            <person name="Larsen T.S."/>
            <person name="Leather S."/>
            <person name="Moule S."/>
            <person name="O'Gaora P."/>
            <person name="Parry C."/>
            <person name="Quail M.A."/>
            <person name="Rutherford K.M."/>
            <person name="Simmonds M."/>
            <person name="Skelton J."/>
            <person name="Stevens K."/>
            <person name="Whitehead S."/>
            <person name="Barrell B.G."/>
        </authorList>
    </citation>
    <scope>NUCLEOTIDE SEQUENCE [LARGE SCALE GENOMIC DNA]</scope>
    <source>
        <strain>CT18</strain>
    </source>
</reference>
<reference key="2">
    <citation type="journal article" date="2003" name="J. Bacteriol.">
        <title>Comparative genomics of Salmonella enterica serovar Typhi strains Ty2 and CT18.</title>
        <authorList>
            <person name="Deng W."/>
            <person name="Liou S.-R."/>
            <person name="Plunkett G. III"/>
            <person name="Mayhew G.F."/>
            <person name="Rose D.J."/>
            <person name="Burland V."/>
            <person name="Kodoyianni V."/>
            <person name="Schwartz D.C."/>
            <person name="Blattner F.R."/>
        </authorList>
    </citation>
    <scope>NUCLEOTIDE SEQUENCE [LARGE SCALE GENOMIC DNA]</scope>
    <source>
        <strain>ATCC 700931 / Ty2</strain>
    </source>
</reference>
<organism>
    <name type="scientific">Salmonella typhi</name>
    <dbReference type="NCBI Taxonomy" id="90370"/>
    <lineage>
        <taxon>Bacteria</taxon>
        <taxon>Pseudomonadati</taxon>
        <taxon>Pseudomonadota</taxon>
        <taxon>Gammaproteobacteria</taxon>
        <taxon>Enterobacterales</taxon>
        <taxon>Enterobacteriaceae</taxon>
        <taxon>Salmonella</taxon>
    </lineage>
</organism>
<dbReference type="EMBL" id="AL513382">
    <property type="protein sequence ID" value="CAD03264.1"/>
    <property type="molecule type" value="Genomic_DNA"/>
</dbReference>
<dbReference type="EMBL" id="AE014613">
    <property type="protein sequence ID" value="AAO71271.1"/>
    <property type="molecule type" value="Genomic_DNA"/>
</dbReference>
<dbReference type="RefSeq" id="NP_458197.1">
    <property type="nucleotide sequence ID" value="NC_003198.1"/>
</dbReference>
<dbReference type="SMR" id="P65961"/>
<dbReference type="STRING" id="220341.gene:17587908"/>
<dbReference type="KEGG" id="stt:t3789"/>
<dbReference type="KEGG" id="sty:STY4065"/>
<dbReference type="PATRIC" id="fig|220341.7.peg.4150"/>
<dbReference type="eggNOG" id="COG2003">
    <property type="taxonomic scope" value="Bacteria"/>
</dbReference>
<dbReference type="HOGENOM" id="CLU_073529_0_1_6"/>
<dbReference type="OMA" id="ELMPREK"/>
<dbReference type="OrthoDB" id="9804482at2"/>
<dbReference type="Proteomes" id="UP000000541">
    <property type="component" value="Chromosome"/>
</dbReference>
<dbReference type="Proteomes" id="UP000002670">
    <property type="component" value="Chromosome"/>
</dbReference>
<dbReference type="GO" id="GO:0046872">
    <property type="term" value="F:metal ion binding"/>
    <property type="evidence" value="ECO:0007669"/>
    <property type="project" value="UniProtKB-KW"/>
</dbReference>
<dbReference type="GO" id="GO:0008237">
    <property type="term" value="F:metallopeptidase activity"/>
    <property type="evidence" value="ECO:0007669"/>
    <property type="project" value="UniProtKB-KW"/>
</dbReference>
<dbReference type="GO" id="GO:0006508">
    <property type="term" value="P:proteolysis"/>
    <property type="evidence" value="ECO:0007669"/>
    <property type="project" value="UniProtKB-KW"/>
</dbReference>
<dbReference type="CDD" id="cd08071">
    <property type="entry name" value="MPN_DUF2466"/>
    <property type="match status" value="1"/>
</dbReference>
<dbReference type="Gene3D" id="3.40.140.10">
    <property type="entry name" value="Cytidine Deaminase, domain 2"/>
    <property type="match status" value="1"/>
</dbReference>
<dbReference type="HAMAP" id="MF_00018">
    <property type="entry name" value="UPF0758_YicR"/>
    <property type="match status" value="1"/>
</dbReference>
<dbReference type="InterPro" id="IPR037518">
    <property type="entry name" value="MPN"/>
</dbReference>
<dbReference type="InterPro" id="IPR025657">
    <property type="entry name" value="RadC_JAB"/>
</dbReference>
<dbReference type="InterPro" id="IPR010994">
    <property type="entry name" value="RuvA_2-like"/>
</dbReference>
<dbReference type="InterPro" id="IPR001405">
    <property type="entry name" value="UPF0758"/>
</dbReference>
<dbReference type="InterPro" id="IPR020891">
    <property type="entry name" value="UPF0758_CS"/>
</dbReference>
<dbReference type="InterPro" id="IPR046778">
    <property type="entry name" value="UPF0758_N"/>
</dbReference>
<dbReference type="InterPro" id="IPR022820">
    <property type="entry name" value="UPF0758_YicR"/>
</dbReference>
<dbReference type="NCBIfam" id="NF000642">
    <property type="entry name" value="PRK00024.1"/>
    <property type="match status" value="1"/>
</dbReference>
<dbReference type="NCBIfam" id="TIGR00608">
    <property type="entry name" value="radc"/>
    <property type="match status" value="1"/>
</dbReference>
<dbReference type="PANTHER" id="PTHR30471">
    <property type="entry name" value="DNA REPAIR PROTEIN RADC"/>
    <property type="match status" value="1"/>
</dbReference>
<dbReference type="PANTHER" id="PTHR30471:SF3">
    <property type="entry name" value="UPF0758 PROTEIN YEES-RELATED"/>
    <property type="match status" value="1"/>
</dbReference>
<dbReference type="Pfam" id="PF04002">
    <property type="entry name" value="RadC"/>
    <property type="match status" value="1"/>
</dbReference>
<dbReference type="Pfam" id="PF20582">
    <property type="entry name" value="UPF0758_N"/>
    <property type="match status" value="1"/>
</dbReference>
<dbReference type="SUPFAM" id="SSF47781">
    <property type="entry name" value="RuvA domain 2-like"/>
    <property type="match status" value="1"/>
</dbReference>
<dbReference type="PROSITE" id="PS50249">
    <property type="entry name" value="MPN"/>
    <property type="match status" value="1"/>
</dbReference>
<dbReference type="PROSITE" id="PS01302">
    <property type="entry name" value="UPF0758"/>
    <property type="match status" value="1"/>
</dbReference>
<sequence>MDTLDELLPREKMLRSGIASLSDVELLALFLRTGTPGKDVMTLAKEILQHFGSLYGLLSADFAQFRGVNGIGLAKFAQLKGIAELARRYYSVRMNEESALLSPEMTREFLQSQLTGEEREIFLVIFLDAQHRVLQHSRLFSGTLNHVEVHPREIVREAIKLNASAVILAHNHPSGCAEPSKADKLITERVIKCCQFMDIRVLDHLIIGRGEYVSFAERGWI</sequence>
<comment type="similarity">
    <text evidence="1">Belongs to the UPF0758 family. YicR subfamily.</text>
</comment>
<evidence type="ECO:0000255" key="1">
    <source>
        <dbReference type="HAMAP-Rule" id="MF_00018"/>
    </source>
</evidence>
<evidence type="ECO:0000255" key="2">
    <source>
        <dbReference type="PROSITE-ProRule" id="PRU01182"/>
    </source>
</evidence>
<gene>
    <name evidence="1" type="primary">yicR</name>
    <name type="ordered locus">STY4065</name>
    <name type="ordered locus">t3789</name>
</gene>
<keyword id="KW-0378">Hydrolase</keyword>
<keyword id="KW-0479">Metal-binding</keyword>
<keyword id="KW-0482">Metalloprotease</keyword>
<keyword id="KW-0645">Protease</keyword>
<keyword id="KW-0862">Zinc</keyword>
<feature type="chain" id="PRO_0000190726" description="UPF0758 protein YicR">
    <location>
        <begin position="1"/>
        <end position="221"/>
    </location>
</feature>
<feature type="domain" description="MPN" evidence="2">
    <location>
        <begin position="99"/>
        <end position="221"/>
    </location>
</feature>
<feature type="short sequence motif" description="JAMM motif" evidence="2">
    <location>
        <begin position="170"/>
        <end position="183"/>
    </location>
</feature>
<feature type="binding site" evidence="2">
    <location>
        <position position="170"/>
    </location>
    <ligand>
        <name>Zn(2+)</name>
        <dbReference type="ChEBI" id="CHEBI:29105"/>
        <note>catalytic</note>
    </ligand>
</feature>
<feature type="binding site" evidence="2">
    <location>
        <position position="172"/>
    </location>
    <ligand>
        <name>Zn(2+)</name>
        <dbReference type="ChEBI" id="CHEBI:29105"/>
        <note>catalytic</note>
    </ligand>
</feature>
<feature type="binding site" evidence="2">
    <location>
        <position position="183"/>
    </location>
    <ligand>
        <name>Zn(2+)</name>
        <dbReference type="ChEBI" id="CHEBI:29105"/>
        <note>catalytic</note>
    </ligand>
</feature>
<proteinExistence type="inferred from homology"/>
<name>YICR_SALTI</name>
<accession>P65961</accession>
<accession>Q8XH09</accession>